<dbReference type="EC" id="3.4.24.-"/>
<dbReference type="EMBL" id="DS995707">
    <property type="protein sequence ID" value="EEQ34869.1"/>
    <property type="status" value="ALT_FRAME"/>
    <property type="molecule type" value="Genomic_DNA"/>
</dbReference>
<dbReference type="RefSeq" id="XP_002843905.1">
    <property type="nucleotide sequence ID" value="XM_002843859.1"/>
</dbReference>
<dbReference type="SMR" id="C5FX29"/>
<dbReference type="MEROPS" id="M36.001"/>
<dbReference type="GlyCosmos" id="C5FX29">
    <property type="glycosylation" value="3 sites, No reported glycans"/>
</dbReference>
<dbReference type="GeneID" id="9228027"/>
<dbReference type="eggNOG" id="ENOG502QTDC">
    <property type="taxonomic scope" value="Eukaryota"/>
</dbReference>
<dbReference type="HOGENOM" id="CLU_012703_3_0_1"/>
<dbReference type="OrthoDB" id="3227768at2759"/>
<dbReference type="Proteomes" id="UP000002035">
    <property type="component" value="Unassembled WGS sequence"/>
</dbReference>
<dbReference type="GO" id="GO:0005576">
    <property type="term" value="C:extracellular region"/>
    <property type="evidence" value="ECO:0007669"/>
    <property type="project" value="UniProtKB-SubCell"/>
</dbReference>
<dbReference type="GO" id="GO:0004222">
    <property type="term" value="F:metalloendopeptidase activity"/>
    <property type="evidence" value="ECO:0007669"/>
    <property type="project" value="InterPro"/>
</dbReference>
<dbReference type="GO" id="GO:0008270">
    <property type="term" value="F:zinc ion binding"/>
    <property type="evidence" value="ECO:0007669"/>
    <property type="project" value="InterPro"/>
</dbReference>
<dbReference type="GO" id="GO:0006508">
    <property type="term" value="P:proteolysis"/>
    <property type="evidence" value="ECO:0007669"/>
    <property type="project" value="UniProtKB-KW"/>
</dbReference>
<dbReference type="CDD" id="cd09596">
    <property type="entry name" value="M36"/>
    <property type="match status" value="1"/>
</dbReference>
<dbReference type="Gene3D" id="3.10.170.10">
    <property type="match status" value="1"/>
</dbReference>
<dbReference type="Gene3D" id="1.10.390.10">
    <property type="entry name" value="Neutral Protease Domain 2"/>
    <property type="match status" value="1"/>
</dbReference>
<dbReference type="InterPro" id="IPR011096">
    <property type="entry name" value="FTP_domain"/>
</dbReference>
<dbReference type="InterPro" id="IPR050371">
    <property type="entry name" value="Fungal_virulence_M36"/>
</dbReference>
<dbReference type="InterPro" id="IPR001842">
    <property type="entry name" value="Peptidase_M36"/>
</dbReference>
<dbReference type="InterPro" id="IPR027268">
    <property type="entry name" value="Peptidase_M4/M1_CTD_sf"/>
</dbReference>
<dbReference type="PANTHER" id="PTHR33478">
    <property type="entry name" value="EXTRACELLULAR METALLOPROTEINASE MEP"/>
    <property type="match status" value="1"/>
</dbReference>
<dbReference type="PANTHER" id="PTHR33478:SF1">
    <property type="entry name" value="EXTRACELLULAR METALLOPROTEINASE MEP"/>
    <property type="match status" value="1"/>
</dbReference>
<dbReference type="Pfam" id="PF07504">
    <property type="entry name" value="FTP"/>
    <property type="match status" value="1"/>
</dbReference>
<dbReference type="Pfam" id="PF02128">
    <property type="entry name" value="Peptidase_M36"/>
    <property type="match status" value="1"/>
</dbReference>
<dbReference type="PRINTS" id="PR00999">
    <property type="entry name" value="FUNGALYSIN"/>
</dbReference>
<dbReference type="SUPFAM" id="SSF55486">
    <property type="entry name" value="Metalloproteases ('zincins'), catalytic domain"/>
    <property type="match status" value="1"/>
</dbReference>
<dbReference type="PROSITE" id="PS00142">
    <property type="entry name" value="ZINC_PROTEASE"/>
    <property type="match status" value="1"/>
</dbReference>
<keyword id="KW-0325">Glycoprotein</keyword>
<keyword id="KW-0378">Hydrolase</keyword>
<keyword id="KW-0479">Metal-binding</keyword>
<keyword id="KW-0482">Metalloprotease</keyword>
<keyword id="KW-0645">Protease</keyword>
<keyword id="KW-1185">Reference proteome</keyword>
<keyword id="KW-0964">Secreted</keyword>
<keyword id="KW-0732">Signal</keyword>
<keyword id="KW-0843">Virulence</keyword>
<keyword id="KW-0862">Zinc</keyword>
<keyword id="KW-0865">Zymogen</keyword>
<gene>
    <name type="primary">MEP5</name>
    <name type="ORF">MCYG_07688</name>
</gene>
<reference key="1">
    <citation type="journal article" date="2012" name="MBio">
        <title>Comparative genome analysis of Trichophyton rubrum and related dermatophytes reveals candidate genes involved in infection.</title>
        <authorList>
            <person name="Martinez D.A."/>
            <person name="Oliver B.G."/>
            <person name="Graeser Y."/>
            <person name="Goldberg J.M."/>
            <person name="Li W."/>
            <person name="Martinez-Rossi N.M."/>
            <person name="Monod M."/>
            <person name="Shelest E."/>
            <person name="Barton R.C."/>
            <person name="Birch E."/>
            <person name="Brakhage A.A."/>
            <person name="Chen Z."/>
            <person name="Gurr S.J."/>
            <person name="Heiman D."/>
            <person name="Heitman J."/>
            <person name="Kosti I."/>
            <person name="Rossi A."/>
            <person name="Saif S."/>
            <person name="Samalova M."/>
            <person name="Saunders C.W."/>
            <person name="Shea T."/>
            <person name="Summerbell R.C."/>
            <person name="Xu J."/>
            <person name="Young S."/>
            <person name="Zeng Q."/>
            <person name="Birren B.W."/>
            <person name="Cuomo C.A."/>
            <person name="White T.C."/>
        </authorList>
    </citation>
    <scope>NUCLEOTIDE SEQUENCE [LARGE SCALE GENOMIC DNA]</scope>
    <source>
        <strain>ATCC MYA-4605 / CBS 113480</strain>
    </source>
</reference>
<evidence type="ECO:0000250" key="1"/>
<evidence type="ECO:0000255" key="2"/>
<evidence type="ECO:0000255" key="3">
    <source>
        <dbReference type="PROSITE-ProRule" id="PRU10095"/>
    </source>
</evidence>
<evidence type="ECO:0000305" key="4"/>
<proteinExistence type="inferred from homology"/>
<protein>
    <recommendedName>
        <fullName>Extracellular metalloproteinase 5</fullName>
        <ecNumber>3.4.24.-</ecNumber>
    </recommendedName>
    <alternativeName>
        <fullName>Fungalysin MEP5</fullName>
    </alternativeName>
</protein>
<organism>
    <name type="scientific">Arthroderma otae (strain ATCC MYA-4605 / CBS 113480)</name>
    <name type="common">Microsporum canis</name>
    <dbReference type="NCBI Taxonomy" id="554155"/>
    <lineage>
        <taxon>Eukaryota</taxon>
        <taxon>Fungi</taxon>
        <taxon>Dikarya</taxon>
        <taxon>Ascomycota</taxon>
        <taxon>Pezizomycotina</taxon>
        <taxon>Eurotiomycetes</taxon>
        <taxon>Eurotiomycetidae</taxon>
        <taxon>Onygenales</taxon>
        <taxon>Arthrodermataceae</taxon>
        <taxon>Microsporum</taxon>
    </lineage>
</organism>
<accession>C5FX29</accession>
<comment type="function">
    <text evidence="1">Secreted metalloproteinase probably acting as a virulence factor.</text>
</comment>
<comment type="cofactor">
    <cofactor evidence="1">
        <name>Zn(2+)</name>
        <dbReference type="ChEBI" id="CHEBI:29105"/>
    </cofactor>
    <text evidence="1">Binds 1 zinc ion per subunit.</text>
</comment>
<comment type="subcellular location">
    <subcellularLocation>
        <location evidence="1">Secreted</location>
    </subcellularLocation>
</comment>
<comment type="similarity">
    <text evidence="4">Belongs to the peptidase M36 family.</text>
</comment>
<comment type="sequence caution" evidence="4">
    <conflict type="frameshift">
        <sequence resource="EMBL-CDS" id="EEQ34869"/>
    </conflict>
</comment>
<sequence length="632" mass="69546">MHGLLLAAGLLSLPLHVLAHPQPGTSLAGRAVDLNAYRMADRASYMSSDEMQAQQPHIASVSAGGYVETATEVVKRVMPGMTFRLVDDHYVGVSGISHVYFRQTMHGMDIDNSDFNVNIGKDGKVLSYGNSFYTGPAPDKAPMVKRDFSDPMQALHGVRKALNLPITADKATVKTVNEHEVTFMGTTGALSDPSAKLCYMAKEDGSLALTWRVETDMGDNWLLSYVDAKSTDQVHNVVDYVSHATYQVYRWPIPDPTEGKREILENPWNLRTSPFTWISDGKNNYTTTRGNNAIAQANPDGGNEYLNNYRPNNKNLKFEYPYSPNMSPPKTYIDASITQLFYSANMVHDLYYMLGFTEKAGNFQVNNRGQGGKGNDFVILNAQDGSGTNNANFATPPDGQPGRMRVYIWTKAQPARDSSFEAGTVIHEYTHGLSNRLCGGPANSACLNGLESGGMGEGWGDFFATAIRLKPNDNRNANYVHGEWVNNSPKGNRLFPYSTSLKTNPLVYTSCNKYNEVHAIGTVWASILYEVLWNLIDKHGKNDGPTPVFENGVPKDGKYLSLKLVLDGMAIQPCKPNFVQARNAIIDADKNLTKGANKCELWKAFAKRGLGTGAKYDPKNRTGSTAVPKECQ</sequence>
<feature type="signal peptide" evidence="2">
    <location>
        <begin position="1"/>
        <end position="20"/>
    </location>
</feature>
<feature type="propeptide" id="PRO_0000384085" evidence="1">
    <location>
        <begin position="21"/>
        <end position="244"/>
    </location>
</feature>
<feature type="chain" id="PRO_0000384086" description="Extracellular metalloproteinase 5">
    <location>
        <begin position="245"/>
        <end position="632"/>
    </location>
</feature>
<feature type="active site" evidence="3">
    <location>
        <position position="428"/>
    </location>
</feature>
<feature type="binding site" evidence="3">
    <location>
        <position position="427"/>
    </location>
    <ligand>
        <name>Zn(2+)</name>
        <dbReference type="ChEBI" id="CHEBI:29105"/>
        <note>catalytic</note>
    </ligand>
</feature>
<feature type="binding site" evidence="3">
    <location>
        <position position="431"/>
    </location>
    <ligand>
        <name>Zn(2+)</name>
        <dbReference type="ChEBI" id="CHEBI:29105"/>
        <note>catalytic</note>
    </ligand>
</feature>
<feature type="glycosylation site" description="N-linked (GlcNAc...) asparagine" evidence="2">
    <location>
        <position position="284"/>
    </location>
</feature>
<feature type="glycosylation site" description="N-linked (GlcNAc...) asparagine" evidence="2">
    <location>
        <position position="591"/>
    </location>
</feature>
<feature type="glycosylation site" description="N-linked (GlcNAc...) asparagine" evidence="2">
    <location>
        <position position="620"/>
    </location>
</feature>
<name>MEP5_ARTOC</name>